<keyword id="KW-0997">Cell inner membrane</keyword>
<keyword id="KW-1003">Cell membrane</keyword>
<keyword id="KW-0472">Membrane</keyword>
<keyword id="KW-1185">Reference proteome</keyword>
<comment type="function">
    <text evidence="1">Could be involved in insertion of integral membrane proteins into the membrane.</text>
</comment>
<comment type="subcellular location">
    <subcellularLocation>
        <location evidence="1">Cell inner membrane</location>
        <topology evidence="1">Peripheral membrane protein</topology>
        <orientation evidence="1">Cytoplasmic side</orientation>
    </subcellularLocation>
</comment>
<comment type="similarity">
    <text evidence="1">Belongs to the UPF0161 family.</text>
</comment>
<sequence>MKIVLIGLIRGYRTFISPLFPPSCRFQPTCSQYGIEAIERFGAIKGAWLTLGRILRCHPFHPGGYDPVPPVKPKK</sequence>
<proteinExistence type="inferred from homology"/>
<evidence type="ECO:0000255" key="1">
    <source>
        <dbReference type="HAMAP-Rule" id="MF_00386"/>
    </source>
</evidence>
<accession>B7K8P8</accession>
<dbReference type="EMBL" id="CP001291">
    <property type="protein sequence ID" value="ACK71246.1"/>
    <property type="molecule type" value="Genomic_DNA"/>
</dbReference>
<dbReference type="RefSeq" id="WP_015954846.1">
    <property type="nucleotide sequence ID" value="NC_011729.1"/>
</dbReference>
<dbReference type="STRING" id="65393.PCC7424_2840"/>
<dbReference type="KEGG" id="cyc:PCC7424_2840"/>
<dbReference type="eggNOG" id="COG0759">
    <property type="taxonomic scope" value="Bacteria"/>
</dbReference>
<dbReference type="HOGENOM" id="CLU_144811_5_2_3"/>
<dbReference type="OrthoDB" id="9801753at2"/>
<dbReference type="Proteomes" id="UP000002384">
    <property type="component" value="Chromosome"/>
</dbReference>
<dbReference type="GO" id="GO:0005886">
    <property type="term" value="C:plasma membrane"/>
    <property type="evidence" value="ECO:0007669"/>
    <property type="project" value="UniProtKB-SubCell"/>
</dbReference>
<dbReference type="HAMAP" id="MF_00386">
    <property type="entry name" value="UPF0161_YidD"/>
    <property type="match status" value="1"/>
</dbReference>
<dbReference type="InterPro" id="IPR002696">
    <property type="entry name" value="Membr_insert_effic_factor_YidD"/>
</dbReference>
<dbReference type="NCBIfam" id="TIGR00278">
    <property type="entry name" value="membrane protein insertion efficiency factor YidD"/>
    <property type="match status" value="1"/>
</dbReference>
<dbReference type="PANTHER" id="PTHR33383">
    <property type="entry name" value="MEMBRANE PROTEIN INSERTION EFFICIENCY FACTOR-RELATED"/>
    <property type="match status" value="1"/>
</dbReference>
<dbReference type="PANTHER" id="PTHR33383:SF1">
    <property type="entry name" value="MEMBRANE PROTEIN INSERTION EFFICIENCY FACTOR-RELATED"/>
    <property type="match status" value="1"/>
</dbReference>
<dbReference type="Pfam" id="PF01809">
    <property type="entry name" value="YidD"/>
    <property type="match status" value="1"/>
</dbReference>
<dbReference type="SMART" id="SM01234">
    <property type="entry name" value="Haemolytic"/>
    <property type="match status" value="1"/>
</dbReference>
<protein>
    <recommendedName>
        <fullName evidence="1">Putative membrane protein insertion efficiency factor</fullName>
    </recommendedName>
</protein>
<gene>
    <name type="ordered locus">PCC7424_2840</name>
</gene>
<organism>
    <name type="scientific">Gloeothece citriformis (strain PCC 7424)</name>
    <name type="common">Cyanothece sp. (strain PCC 7424)</name>
    <dbReference type="NCBI Taxonomy" id="65393"/>
    <lineage>
        <taxon>Bacteria</taxon>
        <taxon>Bacillati</taxon>
        <taxon>Cyanobacteriota</taxon>
        <taxon>Cyanophyceae</taxon>
        <taxon>Oscillatoriophycideae</taxon>
        <taxon>Chroococcales</taxon>
        <taxon>Aphanothecaceae</taxon>
        <taxon>Gloeothece</taxon>
        <taxon>Gloeothece citriformis</taxon>
    </lineage>
</organism>
<name>YIDD_GLOC7</name>
<feature type="chain" id="PRO_1000122633" description="Putative membrane protein insertion efficiency factor">
    <location>
        <begin position="1"/>
        <end position="75"/>
    </location>
</feature>
<reference key="1">
    <citation type="journal article" date="2011" name="MBio">
        <title>Novel metabolic attributes of the genus Cyanothece, comprising a group of unicellular nitrogen-fixing Cyanobacteria.</title>
        <authorList>
            <person name="Bandyopadhyay A."/>
            <person name="Elvitigala T."/>
            <person name="Welsh E."/>
            <person name="Stockel J."/>
            <person name="Liberton M."/>
            <person name="Min H."/>
            <person name="Sherman L.A."/>
            <person name="Pakrasi H.B."/>
        </authorList>
    </citation>
    <scope>NUCLEOTIDE SEQUENCE [LARGE SCALE GENOMIC DNA]</scope>
    <source>
        <strain>PCC 7424</strain>
    </source>
</reference>